<reference key="1">
    <citation type="journal article" date="1996" name="Int. J. Syst. Bacteriol.">
        <title>Phylogenetic analysis of Acinetobacter strains based on the nucleotide sequences of gyrB genes and on the amino acid sequences of their products.</title>
        <authorList>
            <person name="Yamamoto S."/>
            <person name="Harayama S."/>
        </authorList>
    </citation>
    <scope>NUCLEOTIDE SEQUENCE [GENOMIC DNA]</scope>
</reference>
<organism>
    <name type="scientific">Acinetobacter sp. (strain SEIP 12.81)</name>
    <dbReference type="NCBI Taxonomy" id="68995"/>
    <lineage>
        <taxon>Bacteria</taxon>
        <taxon>Pseudomonadati</taxon>
        <taxon>Pseudomonadota</taxon>
        <taxon>Gammaproteobacteria</taxon>
        <taxon>Moraxellales</taxon>
        <taxon>Moraxellaceae</taxon>
        <taxon>Acinetobacter</taxon>
    </lineage>
</organism>
<dbReference type="EC" id="5.6.2.2" evidence="2"/>
<dbReference type="EMBL" id="D73438">
    <property type="protein sequence ID" value="BAA11163.1"/>
    <property type="molecule type" value="Genomic_DNA"/>
</dbReference>
<dbReference type="EMBL" id="D73423">
    <property type="protein sequence ID" value="BAA11148.1"/>
    <property type="molecule type" value="Genomic_DNA"/>
</dbReference>
<dbReference type="SMR" id="Q44275"/>
<dbReference type="GO" id="GO:0005737">
    <property type="term" value="C:cytoplasm"/>
    <property type="evidence" value="ECO:0007669"/>
    <property type="project" value="UniProtKB-SubCell"/>
</dbReference>
<dbReference type="GO" id="GO:0005524">
    <property type="term" value="F:ATP binding"/>
    <property type="evidence" value="ECO:0007669"/>
    <property type="project" value="UniProtKB-KW"/>
</dbReference>
<dbReference type="GO" id="GO:0003677">
    <property type="term" value="F:DNA binding"/>
    <property type="evidence" value="ECO:0007669"/>
    <property type="project" value="UniProtKB-KW"/>
</dbReference>
<dbReference type="GO" id="GO:0003918">
    <property type="term" value="F:DNA topoisomerase type II (double strand cut, ATP-hydrolyzing) activity"/>
    <property type="evidence" value="ECO:0007669"/>
    <property type="project" value="UniProtKB-EC"/>
</dbReference>
<dbReference type="GO" id="GO:0006265">
    <property type="term" value="P:DNA topological change"/>
    <property type="evidence" value="ECO:0007669"/>
    <property type="project" value="InterPro"/>
</dbReference>
<dbReference type="Gene3D" id="3.40.50.670">
    <property type="match status" value="1"/>
</dbReference>
<dbReference type="Gene3D" id="3.30.565.10">
    <property type="entry name" value="Histidine kinase-like ATPase, C-terminal domain"/>
    <property type="match status" value="1"/>
</dbReference>
<dbReference type="InterPro" id="IPR036890">
    <property type="entry name" value="HATPase_C_sf"/>
</dbReference>
<dbReference type="InterPro" id="IPR001241">
    <property type="entry name" value="Topo_IIA"/>
</dbReference>
<dbReference type="InterPro" id="IPR013760">
    <property type="entry name" value="Topo_IIA-like_dom_sf"/>
</dbReference>
<dbReference type="InterPro" id="IPR000565">
    <property type="entry name" value="Topo_IIA_B"/>
</dbReference>
<dbReference type="InterPro" id="IPR013759">
    <property type="entry name" value="Topo_IIA_B_C"/>
</dbReference>
<dbReference type="InterPro" id="IPR018522">
    <property type="entry name" value="TopoIIA_CS"/>
</dbReference>
<dbReference type="InterPro" id="IPR006171">
    <property type="entry name" value="TOPRIM_dom"/>
</dbReference>
<dbReference type="PANTHER" id="PTHR45866:SF1">
    <property type="entry name" value="DNA GYRASE SUBUNIT B, MITOCHONDRIAL"/>
    <property type="match status" value="1"/>
</dbReference>
<dbReference type="PANTHER" id="PTHR45866">
    <property type="entry name" value="DNA GYRASE/TOPOISOMERASE SUBUNIT B"/>
    <property type="match status" value="1"/>
</dbReference>
<dbReference type="Pfam" id="PF01751">
    <property type="entry name" value="Toprim"/>
    <property type="match status" value="1"/>
</dbReference>
<dbReference type="PRINTS" id="PR01159">
    <property type="entry name" value="DNAGYRASEB"/>
</dbReference>
<dbReference type="SMART" id="SM00433">
    <property type="entry name" value="TOP2c"/>
    <property type="match status" value="1"/>
</dbReference>
<dbReference type="SUPFAM" id="SSF55874">
    <property type="entry name" value="ATPase domain of HSP90 chaperone/DNA topoisomerase II/histidine kinase"/>
    <property type="match status" value="1"/>
</dbReference>
<dbReference type="SUPFAM" id="SSF56719">
    <property type="entry name" value="Type II DNA topoisomerase"/>
    <property type="match status" value="1"/>
</dbReference>
<dbReference type="PROSITE" id="PS00177">
    <property type="entry name" value="TOPOISOMERASE_II"/>
    <property type="match status" value="1"/>
</dbReference>
<dbReference type="PROSITE" id="PS50880">
    <property type="entry name" value="TOPRIM"/>
    <property type="match status" value="1"/>
</dbReference>
<proteinExistence type="inferred from homology"/>
<comment type="function">
    <text evidence="1">A type II topoisomerase that negatively supercoils closed circular double-stranded (ds) DNA in an ATP-dependent manner to modulate DNA topology and maintain chromosomes in an underwound state. Negative supercoiling favors strand separation, and DNA replication, transcription, recombination and repair, all of which involve strand separation. Also able to catalyze the interconversion of other topological isomers of dsDNA rings, including catenanes and knotted rings. Type II topoisomerases break and join 2 DNA strands simultaneously in an ATP-dependent manner.</text>
</comment>
<comment type="catalytic activity">
    <reaction evidence="2">
        <text>ATP-dependent breakage, passage and rejoining of double-stranded DNA.</text>
        <dbReference type="EC" id="5.6.2.2"/>
    </reaction>
</comment>
<comment type="subunit">
    <text evidence="1">Heterotetramer, composed of two GyrA and two GyrB chains. In the heterotetramer, GyrA contains the active site tyrosine that forms a transient covalent intermediate with DNA, while GyrB binds cofactors and catalyzes ATP hydrolysis.</text>
</comment>
<comment type="subcellular location">
    <subcellularLocation>
        <location evidence="1">Cytoplasm</location>
    </subcellularLocation>
</comment>
<comment type="miscellaneous">
    <text evidence="1">Few gyrases are as efficient as E.coli at forming negative supercoils. Not all organisms have 2 type II topoisomerases; in organisms with a single type II topoisomerase this enzyme also has to decatenate newly replicated chromosomes.</text>
</comment>
<comment type="similarity">
    <text evidence="3">Belongs to the type II topoisomerase GyrB family.</text>
</comment>
<sequence length="216" mass="23767">SHKVSGGLHGVGVSVVNALSSKLELTVQRAGQIHEQEYQHGVPQYPLRVVGQTERTGTKVRFWPSAETFSQTIFNVDILARRLRELSFLNAGVRIVLCDERINLEHVFDYEGGLSEKSALDIAGLPGKLADCQEKDPALSELFLVEGDSAGGSAKQGRNRKMQAILPLKGKILNVERARFDRMISSAEVGTLITALGCGIGREEYNPDKLRYHKIV</sequence>
<feature type="chain" id="PRO_0000145287" description="DNA gyrase subunit B">
    <location>
        <begin position="1" status="less than"/>
        <end position="216" status="greater than"/>
    </location>
</feature>
<feature type="domain" description="Toprim" evidence="2">
    <location>
        <begin position="140"/>
        <end position="216" status="greater than"/>
    </location>
</feature>
<feature type="site" description="Interaction with DNA" evidence="2">
    <location>
        <position position="171"/>
    </location>
</feature>
<feature type="site" description="Interaction with DNA" evidence="2">
    <location>
        <position position="174"/>
    </location>
</feature>
<feature type="non-consecutive residues" evidence="3">
    <location>
        <begin position="116"/>
        <end position="117"/>
    </location>
</feature>
<feature type="non-terminal residue">
    <location>
        <position position="1"/>
    </location>
</feature>
<feature type="non-terminal residue">
    <location>
        <position position="216"/>
    </location>
</feature>
<evidence type="ECO:0000250" key="1">
    <source>
        <dbReference type="UniProtKB" id="P0AES6"/>
    </source>
</evidence>
<evidence type="ECO:0000255" key="2">
    <source>
        <dbReference type="PROSITE-ProRule" id="PRU00995"/>
    </source>
</evidence>
<evidence type="ECO:0000305" key="3"/>
<gene>
    <name type="primary">gyrB</name>
</gene>
<keyword id="KW-0067">ATP-binding</keyword>
<keyword id="KW-0963">Cytoplasm</keyword>
<keyword id="KW-0238">DNA-binding</keyword>
<keyword id="KW-0413">Isomerase</keyword>
<keyword id="KW-0547">Nucleotide-binding</keyword>
<keyword id="KW-0799">Topoisomerase</keyword>
<accession>Q44275</accession>
<accession>Q59148</accession>
<protein>
    <recommendedName>
        <fullName>DNA gyrase subunit B</fullName>
        <ecNumber evidence="2">5.6.2.2</ecNumber>
    </recommendedName>
</protein>
<name>GYRB_ACIS8</name>